<organism>
    <name type="scientific">Bacillus cytotoxicus (strain DSM 22905 / CIP 110041 / 391-98 / NVH 391-98)</name>
    <dbReference type="NCBI Taxonomy" id="315749"/>
    <lineage>
        <taxon>Bacteria</taxon>
        <taxon>Bacillati</taxon>
        <taxon>Bacillota</taxon>
        <taxon>Bacilli</taxon>
        <taxon>Bacillales</taxon>
        <taxon>Bacillaceae</taxon>
        <taxon>Bacillus</taxon>
        <taxon>Bacillus cereus group</taxon>
    </lineage>
</organism>
<name>MURC_BACCN</name>
<proteinExistence type="inferred from homology"/>
<gene>
    <name evidence="1" type="primary">murC</name>
    <name type="ordered locus">Bcer98_3349</name>
</gene>
<accession>A7GTV6</accession>
<keyword id="KW-0067">ATP-binding</keyword>
<keyword id="KW-0131">Cell cycle</keyword>
<keyword id="KW-0132">Cell division</keyword>
<keyword id="KW-0133">Cell shape</keyword>
<keyword id="KW-0961">Cell wall biogenesis/degradation</keyword>
<keyword id="KW-0963">Cytoplasm</keyword>
<keyword id="KW-0436">Ligase</keyword>
<keyword id="KW-0547">Nucleotide-binding</keyword>
<keyword id="KW-0573">Peptidoglycan synthesis</keyword>
<protein>
    <recommendedName>
        <fullName evidence="1">UDP-N-acetylmuramate--L-alanine ligase</fullName>
        <ecNumber evidence="1">6.3.2.8</ecNumber>
    </recommendedName>
    <alternativeName>
        <fullName evidence="1">UDP-N-acetylmuramoyl-L-alanine synthetase</fullName>
    </alternativeName>
</protein>
<evidence type="ECO:0000255" key="1">
    <source>
        <dbReference type="HAMAP-Rule" id="MF_00046"/>
    </source>
</evidence>
<dbReference type="EC" id="6.3.2.8" evidence="1"/>
<dbReference type="EMBL" id="CP000764">
    <property type="protein sequence ID" value="ABS23564.1"/>
    <property type="molecule type" value="Genomic_DNA"/>
</dbReference>
<dbReference type="RefSeq" id="WP_012095808.1">
    <property type="nucleotide sequence ID" value="NC_009674.1"/>
</dbReference>
<dbReference type="SMR" id="A7GTV6"/>
<dbReference type="STRING" id="315749.Bcer98_3349"/>
<dbReference type="GeneID" id="33898590"/>
<dbReference type="KEGG" id="bcy:Bcer98_3349"/>
<dbReference type="eggNOG" id="COG0773">
    <property type="taxonomic scope" value="Bacteria"/>
</dbReference>
<dbReference type="HOGENOM" id="CLU_028104_1_0_9"/>
<dbReference type="OrthoDB" id="9804126at2"/>
<dbReference type="UniPathway" id="UPA00219"/>
<dbReference type="Proteomes" id="UP000002300">
    <property type="component" value="Chromosome"/>
</dbReference>
<dbReference type="GO" id="GO:0005737">
    <property type="term" value="C:cytoplasm"/>
    <property type="evidence" value="ECO:0007669"/>
    <property type="project" value="UniProtKB-SubCell"/>
</dbReference>
<dbReference type="GO" id="GO:0005524">
    <property type="term" value="F:ATP binding"/>
    <property type="evidence" value="ECO:0007669"/>
    <property type="project" value="UniProtKB-UniRule"/>
</dbReference>
<dbReference type="GO" id="GO:0008763">
    <property type="term" value="F:UDP-N-acetylmuramate-L-alanine ligase activity"/>
    <property type="evidence" value="ECO:0007669"/>
    <property type="project" value="UniProtKB-UniRule"/>
</dbReference>
<dbReference type="GO" id="GO:0051301">
    <property type="term" value="P:cell division"/>
    <property type="evidence" value="ECO:0007669"/>
    <property type="project" value="UniProtKB-KW"/>
</dbReference>
<dbReference type="GO" id="GO:0071555">
    <property type="term" value="P:cell wall organization"/>
    <property type="evidence" value="ECO:0007669"/>
    <property type="project" value="UniProtKB-KW"/>
</dbReference>
<dbReference type="GO" id="GO:0009252">
    <property type="term" value="P:peptidoglycan biosynthetic process"/>
    <property type="evidence" value="ECO:0007669"/>
    <property type="project" value="UniProtKB-UniRule"/>
</dbReference>
<dbReference type="GO" id="GO:0008360">
    <property type="term" value="P:regulation of cell shape"/>
    <property type="evidence" value="ECO:0007669"/>
    <property type="project" value="UniProtKB-KW"/>
</dbReference>
<dbReference type="Gene3D" id="3.90.190.20">
    <property type="entry name" value="Mur ligase, C-terminal domain"/>
    <property type="match status" value="1"/>
</dbReference>
<dbReference type="Gene3D" id="3.40.1190.10">
    <property type="entry name" value="Mur-like, catalytic domain"/>
    <property type="match status" value="1"/>
</dbReference>
<dbReference type="Gene3D" id="3.40.50.720">
    <property type="entry name" value="NAD(P)-binding Rossmann-like Domain"/>
    <property type="match status" value="1"/>
</dbReference>
<dbReference type="HAMAP" id="MF_00046">
    <property type="entry name" value="MurC"/>
    <property type="match status" value="1"/>
</dbReference>
<dbReference type="InterPro" id="IPR036565">
    <property type="entry name" value="Mur-like_cat_sf"/>
</dbReference>
<dbReference type="InterPro" id="IPR004101">
    <property type="entry name" value="Mur_ligase_C"/>
</dbReference>
<dbReference type="InterPro" id="IPR036615">
    <property type="entry name" value="Mur_ligase_C_dom_sf"/>
</dbReference>
<dbReference type="InterPro" id="IPR013221">
    <property type="entry name" value="Mur_ligase_cen"/>
</dbReference>
<dbReference type="InterPro" id="IPR000713">
    <property type="entry name" value="Mur_ligase_N"/>
</dbReference>
<dbReference type="InterPro" id="IPR050061">
    <property type="entry name" value="MurCDEF_pg_biosynth"/>
</dbReference>
<dbReference type="InterPro" id="IPR005758">
    <property type="entry name" value="UDP-N-AcMur_Ala_ligase_MurC"/>
</dbReference>
<dbReference type="NCBIfam" id="TIGR01082">
    <property type="entry name" value="murC"/>
    <property type="match status" value="1"/>
</dbReference>
<dbReference type="PANTHER" id="PTHR43445:SF3">
    <property type="entry name" value="UDP-N-ACETYLMURAMATE--L-ALANINE LIGASE"/>
    <property type="match status" value="1"/>
</dbReference>
<dbReference type="PANTHER" id="PTHR43445">
    <property type="entry name" value="UDP-N-ACETYLMURAMATE--L-ALANINE LIGASE-RELATED"/>
    <property type="match status" value="1"/>
</dbReference>
<dbReference type="Pfam" id="PF01225">
    <property type="entry name" value="Mur_ligase"/>
    <property type="match status" value="1"/>
</dbReference>
<dbReference type="Pfam" id="PF02875">
    <property type="entry name" value="Mur_ligase_C"/>
    <property type="match status" value="1"/>
</dbReference>
<dbReference type="Pfam" id="PF08245">
    <property type="entry name" value="Mur_ligase_M"/>
    <property type="match status" value="1"/>
</dbReference>
<dbReference type="SUPFAM" id="SSF51984">
    <property type="entry name" value="MurCD N-terminal domain"/>
    <property type="match status" value="1"/>
</dbReference>
<dbReference type="SUPFAM" id="SSF53623">
    <property type="entry name" value="MurD-like peptide ligases, catalytic domain"/>
    <property type="match status" value="1"/>
</dbReference>
<dbReference type="SUPFAM" id="SSF53244">
    <property type="entry name" value="MurD-like peptide ligases, peptide-binding domain"/>
    <property type="match status" value="1"/>
</dbReference>
<sequence>MTVYHFVGIKGTGMSSLAQILHDMKNTVQGSDYEKRFFTQVALEKRGISILPFDKNNIKEGQVIIAGNAFPDTHEEIMAAKELNIPVHRYHHFLGNLMSQYTSVAVTGAHGKTSTTGLLAHVMQGANPTSYLIGDGTGHGVENSKYFAFEACEYRRHFLSYYPDYAIMTNIDFDHPDYFADINDVFHAFQEMALQVKKGIIACGDDEELQKIQAKVPVIFYGFGEDNDFQARNIQKRTDGTVFDVFVRNTYYETFKITGYGNHSVLNALAVIALCHYENIDVEVVKHQLTTFEGVKRRFNEKTVRDQVIIDDYAHHPTEINATIEAAHQKYPEREIIAIFQPHTFSRTETFLDEFAESLSKADQVYLCDIFGSARENKGELTIEDLQKRIDGAELITDTTTDILKKHKNGVLIFMGAGDIQKFEAAYIKEVQVAEK</sequence>
<reference key="1">
    <citation type="journal article" date="2008" name="Chem. Biol. Interact.">
        <title>Extending the Bacillus cereus group genomics to putative food-borne pathogens of different toxicity.</title>
        <authorList>
            <person name="Lapidus A."/>
            <person name="Goltsman E."/>
            <person name="Auger S."/>
            <person name="Galleron N."/>
            <person name="Segurens B."/>
            <person name="Dossat C."/>
            <person name="Land M.L."/>
            <person name="Broussolle V."/>
            <person name="Brillard J."/>
            <person name="Guinebretiere M.-H."/>
            <person name="Sanchis V."/>
            <person name="Nguen-the C."/>
            <person name="Lereclus D."/>
            <person name="Richardson P."/>
            <person name="Wincker P."/>
            <person name="Weissenbach J."/>
            <person name="Ehrlich S.D."/>
            <person name="Sorokin A."/>
        </authorList>
    </citation>
    <scope>NUCLEOTIDE SEQUENCE [LARGE SCALE GENOMIC DNA]</scope>
    <source>
        <strain>DSM 22905 / CIP 110041 / 391-98 / NVH 391-98</strain>
    </source>
</reference>
<feature type="chain" id="PRO_1000074729" description="UDP-N-acetylmuramate--L-alanine ligase">
    <location>
        <begin position="1"/>
        <end position="436"/>
    </location>
</feature>
<feature type="binding site" evidence="1">
    <location>
        <begin position="108"/>
        <end position="114"/>
    </location>
    <ligand>
        <name>ATP</name>
        <dbReference type="ChEBI" id="CHEBI:30616"/>
    </ligand>
</feature>
<comment type="function">
    <text evidence="1">Cell wall formation.</text>
</comment>
<comment type="catalytic activity">
    <reaction evidence="1">
        <text>UDP-N-acetyl-alpha-D-muramate + L-alanine + ATP = UDP-N-acetyl-alpha-D-muramoyl-L-alanine + ADP + phosphate + H(+)</text>
        <dbReference type="Rhea" id="RHEA:23372"/>
        <dbReference type="ChEBI" id="CHEBI:15378"/>
        <dbReference type="ChEBI" id="CHEBI:30616"/>
        <dbReference type="ChEBI" id="CHEBI:43474"/>
        <dbReference type="ChEBI" id="CHEBI:57972"/>
        <dbReference type="ChEBI" id="CHEBI:70757"/>
        <dbReference type="ChEBI" id="CHEBI:83898"/>
        <dbReference type="ChEBI" id="CHEBI:456216"/>
        <dbReference type="EC" id="6.3.2.8"/>
    </reaction>
</comment>
<comment type="pathway">
    <text evidence="1">Cell wall biogenesis; peptidoglycan biosynthesis.</text>
</comment>
<comment type="subcellular location">
    <subcellularLocation>
        <location evidence="1">Cytoplasm</location>
    </subcellularLocation>
</comment>
<comment type="similarity">
    <text evidence="1">Belongs to the MurCDEF family.</text>
</comment>